<comment type="function">
    <text evidence="1 6 7 8 9 11 14 15 17">Component of a heterodimeric G-protein coupled receptor for GABA, formed by GABBR1 and GABBR2 (PubMed:9872315, PubMed:9872317, PubMed:9872744). Within the heterodimeric GABA receptor, only GABBR1 seems to bind agonists, while GABBR2 mediates coupling to G proteins (PubMed:10658574, PubMed:9872317). Ligand binding causes a conformation change that triggers signaling via guanine nucleotide-binding proteins (G proteins) and modulates the activity of down-stream effectors, such as adenylate cyclase (PubMed:10075644, PubMed:10924501, PubMed:9872315, PubMed:9872744). Signaling inhibits adenylate cyclase, stimulates phospholipase A2, activates potassium channels, inactivates voltage-dependent calcium-channels and modulates inositol phospholipid hydrolysis (PubMed:10457184, PubMed:10692480, PubMed:10924501, PubMed:9069281, PubMed:9872315, PubMed:9872744). Calcium is required for high affinity binding to GABA (PubMed:10692480). Plays a critical role in the fine-tuning of inhibitory synaptic transmission (PubMed:9872744). Pre-synaptic GABA receptor inhibits neurotransmitter release by down-regulating high-voltage activated calcium channels, whereas postsynaptic GABA receptor decreases neuronal excitability by activating a prominent inwardly rectifying potassium (Kir) conductance that underlies the late inhibitory postsynaptic potentials (PubMed:10692480, PubMed:10924501, PubMed:9872744). Not only implicated in synaptic inhibition but also in hippocampal long-term potentiation, slow wave sleep, muscle relaxation and antinociception (By similarity).</text>
</comment>
<comment type="subunit">
    <text evidence="11 12 15 16 17">Heterodimer of GABBR1 and GABBR2 (PubMed:9872315, PubMed:9872317, PubMed:9872744). Homodimers may form, but are inactive (PubMed:9872317). Interacts (via C-terminus) with ATF4 (via leucine zipper domain) (PubMed:10924501). Interacts with JAKMIP1 (PubMed:14718537).</text>
</comment>
<comment type="interaction">
    <interactant intactId="EBI-7090268">
        <id>Q9Z0U4</id>
    </interactant>
    <interactant intactId="EBI-7090239">
        <id>O88871</id>
        <label>Gabbr2</label>
    </interactant>
    <organismsDiffer>false</organismsDiffer>
    <experiments>8</experiments>
</comment>
<comment type="subcellular location">
    <subcellularLocation>
        <location evidence="7 12 14 15">Cell membrane</location>
        <topology evidence="26">Multi-pass membrane protein</topology>
    </subcellularLocation>
    <subcellularLocation>
        <location evidence="11">Postsynaptic cell membrane</location>
        <topology evidence="26">Multi-pass membrane protein</topology>
    </subcellularLocation>
    <subcellularLocation>
        <location evidence="11 16">Cell projection</location>
        <location evidence="11 16">Dendrite</location>
    </subcellularLocation>
    <subcellularLocation>
        <location evidence="12">Perikaryon</location>
    </subcellularLocation>
    <text evidence="11 27">Coexpression of GABBR1 and GABBR2 is required for GABBR1 maturation and transport to the plasma membrane (PubMed:10457184). Colocalizes with ATF4 in hippocampal neuron dendritic membranes (PubMed:10924501).</text>
</comment>
<comment type="alternative products">
    <event type="alternative splicing"/>
    <isoform>
        <id>Q9Z0U4-2</id>
        <name evidence="22">1A</name>
        <sequence type="displayed"/>
    </isoform>
    <isoform>
        <id>Q9Z0U4-1</id>
        <name evidence="20">1E</name>
        <name evidence="20">1C</name>
        <sequence type="described" ref="VSP_062373"/>
    </isoform>
    <isoform>
        <id>Q9Z0U4-3</id>
        <name evidence="22">1B</name>
        <sequence type="described" ref="VSP_062372"/>
    </isoform>
    <isoform>
        <id>Q9Z0U4-4</id>
        <name evidence="25">1C</name>
        <sequence type="described" ref="VSP_062372 VSP_062373"/>
    </isoform>
    <isoform>
        <id>Q9Z0U4-5</id>
        <name evidence="25">1D</name>
        <sequence type="described" ref="VSP_062372 VSP_062374 VSP_062375"/>
    </isoform>
</comment>
<comment type="tissue specificity">
    <text evidence="10 11 14 15 17 18">Ubiquitously expressed in tissues including the forebrain, cerebellum, eye, atrium, ventricle, lung, stomach, small intestine, colon, liver, spleen, kidney, urinary bladder and skeletal muscle (PubMed:9875211). Expressed at low levels in testis, and more highly in brain regions (PubMed:9069281). Expression is high the brain regions including cerebral cortical layers, with higher expression in VIb than in the II-V layers, pyramidal CA1-CA3 cell layers and granular cell layers of the hippocampus, granular cell layers of the dentate gyrus, including the caudate, putamen, nucleus accumbens and olfactory tubercle, the granular layer cell layers of the medial habenula, in the cerebellum, predominantly in Purkinje cells, and in the granule cell layer (PubMed:10727622, PubMed:9069281, PubMed:9872315, PubMed:9872744). Also expressed in areas of the brain including the medial geniculate nucleus, substantia nigra, pars compacta, the ventral tegmental area, and in several thalamic, amygdaloid and hypothalamic nuclei, such as the arcuate nucleus of the hypothalamus and mammilary bodies of the hypothalamus (PubMed:9069281, PubMed:9872744). Expressed in the amacrine cell of the retina (PubMed:10924501).</text>
</comment>
<comment type="tissue specificity">
    <molecule>Isoform 1A</molecule>
    <text evidence="8">Expressed in the brain, spinal cord, stomach, testis, adrenal gland, pituitary, spleen and prostate.</text>
</comment>
<comment type="tissue specificity">
    <molecule>Isoform 1B</molecule>
    <text evidence="8">Expressed in the brain, spinal cord, stomach, testis, kidney and liver.</text>
</comment>
<comment type="tissue specificity">
    <molecule>Isoform 1C</molecule>
    <text evidence="18">Ubiquitously expressed.</text>
</comment>
<comment type="tissue specificity">
    <molecule>Isoform 1D</molecule>
    <text evidence="18">Expressed in the forebrain, cerebellum, eye, kidney and urinary bladder.</text>
</comment>
<comment type="tissue specificity">
    <molecule>Isoform 1E</molecule>
    <text evidence="7">Ubiquitously expressed with high expression in the pyramidal CA1-CA3 cell layers of the hippocampus, the granule cell layers of the dentate gyrus and olfactory tubercle, the whole cortex, and Purkinje cells of the cerebellum. Moderate expression in the granule cell layer of the cerebellum.</text>
</comment>
<comment type="developmental stage">
    <text evidence="17">At 17 dpc during embryonic development, highly expressed in brain regions including the striatum, olfactory bulb, septal nuclei, lateral habenula, pyramidal CA1-CA2 cell layers of the hippocampus and in the neuroepithelial cells of the ventricular zone. On the day of birth, expressed in the regions of the brain including hippocampus, thalamic nuclei, cortex and cerebellum.</text>
</comment>
<comment type="domain">
    <text>Alpha-helical parts of the C-terminal intracellular region mediate heterodimeric interaction with GABBR2. The linker region between the transmembrane domain 3 (TM3) and the transmembrane domain 4 (TM4) probably plays a role in the specificity for G-protein coupling.</text>
</comment>
<comment type="similarity">
    <text evidence="26">Belongs to the G-protein coupled receptor 3 family. GABA-B receptor subfamily.</text>
</comment>
<accession>Q9Z0U4</accession>
<accession>O08620</accession>
<accession>O08621</accession>
<accession>Q9Z0F9</accession>
<accession>Q9Z308</accession>
<proteinExistence type="evidence at protein level"/>
<dbReference type="EMBL" id="Y10369">
    <property type="protein sequence ID" value="CAA71398.1"/>
    <property type="molecule type" value="mRNA"/>
</dbReference>
<dbReference type="EMBL" id="Y10370">
    <property type="protein sequence ID" value="CAA71399.1"/>
    <property type="molecule type" value="mRNA"/>
</dbReference>
<dbReference type="EMBL" id="AB016160">
    <property type="protein sequence ID" value="BAA34708.1"/>
    <property type="molecule type" value="mRNA"/>
</dbReference>
<dbReference type="EMBL" id="AB016161">
    <property type="protein sequence ID" value="BAA34709.1"/>
    <property type="molecule type" value="mRNA"/>
</dbReference>
<dbReference type="EMBL" id="AH007482">
    <property type="protein sequence ID" value="AAD19656.1"/>
    <property type="molecule type" value="Genomic_DNA"/>
</dbReference>
<dbReference type="EMBL" id="AF110796">
    <property type="protein sequence ID" value="AAD19656.1"/>
    <property type="status" value="JOINED"/>
    <property type="molecule type" value="Genomic_DNA"/>
</dbReference>
<dbReference type="EMBL" id="AH007482">
    <property type="protein sequence ID" value="AAD19657.1"/>
    <property type="molecule type" value="Genomic_DNA"/>
</dbReference>
<dbReference type="EMBL" id="AF110796">
    <property type="protein sequence ID" value="AAD19657.1"/>
    <property type="status" value="JOINED"/>
    <property type="molecule type" value="Genomic_DNA"/>
</dbReference>
<dbReference type="EMBL" id="AH007482">
    <property type="protein sequence ID" value="AAD19658.1"/>
    <property type="molecule type" value="Genomic_DNA"/>
</dbReference>
<dbReference type="EMBL" id="AF110796">
    <property type="protein sequence ID" value="AAD19658.1"/>
    <property type="status" value="JOINED"/>
    <property type="molecule type" value="Genomic_DNA"/>
</dbReference>
<dbReference type="EMBL" id="AH007482">
    <property type="protein sequence ID" value="AAD19659.1"/>
    <property type="molecule type" value="Genomic_DNA"/>
</dbReference>
<dbReference type="EMBL" id="AF110796">
    <property type="protein sequence ID" value="AAD19659.1"/>
    <property type="status" value="JOINED"/>
    <property type="molecule type" value="Genomic_DNA"/>
</dbReference>
<dbReference type="RefSeq" id="NP_112290.2">
    <molecule id="Q9Z0U4-2"/>
    <property type="nucleotide sequence ID" value="NM_031028.3"/>
</dbReference>
<dbReference type="RefSeq" id="XP_006255941.1">
    <molecule id="Q9Z0U4-1"/>
    <property type="nucleotide sequence ID" value="XM_006255879.5"/>
</dbReference>
<dbReference type="PDB" id="1SRZ">
    <property type="method" value="NMR"/>
    <property type="chains" value="A=96-159"/>
</dbReference>
<dbReference type="PDB" id="1SS2">
    <property type="method" value="NMR"/>
    <property type="chains" value="A=96-159"/>
</dbReference>
<dbReference type="PDBsum" id="1SRZ"/>
<dbReference type="PDBsum" id="1SS2"/>
<dbReference type="BMRB" id="Q9Z0U4"/>
<dbReference type="SMR" id="Q9Z0U4"/>
<dbReference type="BioGRID" id="249557">
    <property type="interactions" value="2"/>
</dbReference>
<dbReference type="ComplexPortal" id="CPX-404">
    <property type="entry name" value="GABA-B receptor complex"/>
</dbReference>
<dbReference type="CORUM" id="Q9Z0U4"/>
<dbReference type="FunCoup" id="Q9Z0U4">
    <property type="interactions" value="2388"/>
</dbReference>
<dbReference type="IntAct" id="Q9Z0U4">
    <property type="interactions" value="2"/>
</dbReference>
<dbReference type="MINT" id="Q9Z0U4"/>
<dbReference type="STRING" id="10116.ENSRNOP00000047788"/>
<dbReference type="ChEMBL" id="CHEMBL2753"/>
<dbReference type="DrugCentral" id="Q9Z0U4"/>
<dbReference type="GuidetoPHARMACOLOGY" id="240"/>
<dbReference type="GlyCosmos" id="Q9Z0U4">
    <property type="glycosylation" value="7 sites, 2 glycans"/>
</dbReference>
<dbReference type="GlyGen" id="Q9Z0U4">
    <property type="glycosylation" value="7 sites, 2 N-linked glycans (2 sites)"/>
</dbReference>
<dbReference type="iPTMnet" id="Q9Z0U4"/>
<dbReference type="PhosphoSitePlus" id="Q9Z0U4"/>
<dbReference type="PaxDb" id="10116-ENSRNOP00000047788"/>
<dbReference type="ABCD" id="Q9Z0U4">
    <property type="antibodies" value="1 sequenced antibody"/>
</dbReference>
<dbReference type="Ensembl" id="ENSRNOT00000085050.2">
    <molecule id="Q9Z0U4-1"/>
    <property type="protein sequence ID" value="ENSRNOP00000075181.2"/>
    <property type="gene ID" value="ENSRNOG00000000774.9"/>
</dbReference>
<dbReference type="Ensembl" id="ENSRNOT00000088396.2">
    <molecule id="Q9Z0U4-3"/>
    <property type="protein sequence ID" value="ENSRNOP00000072226.1"/>
    <property type="gene ID" value="ENSRNOG00000000774.9"/>
</dbReference>
<dbReference type="Ensembl" id="ENSRNOT00000090936.2">
    <molecule id="Q9Z0U4-2"/>
    <property type="protein sequence ID" value="ENSRNOP00000071413.2"/>
    <property type="gene ID" value="ENSRNOG00000000774.9"/>
</dbReference>
<dbReference type="GeneID" id="81657"/>
<dbReference type="KEGG" id="rno:81657"/>
<dbReference type="UCSC" id="RGD:621537">
    <molecule id="Q9Z0U4-2"/>
    <property type="organism name" value="rat"/>
</dbReference>
<dbReference type="AGR" id="RGD:621537"/>
<dbReference type="CTD" id="2550"/>
<dbReference type="RGD" id="621537">
    <property type="gene designation" value="Gabbr1"/>
</dbReference>
<dbReference type="eggNOG" id="KOG1055">
    <property type="taxonomic scope" value="Eukaryota"/>
</dbReference>
<dbReference type="GeneTree" id="ENSGT00940000157642"/>
<dbReference type="InParanoid" id="Q9Z0U4"/>
<dbReference type="OMA" id="WAGGEAC"/>
<dbReference type="OrthoDB" id="17569at2759"/>
<dbReference type="PhylomeDB" id="Q9Z0U4"/>
<dbReference type="TreeFam" id="TF313965"/>
<dbReference type="Reactome" id="R-RNO-1296041">
    <property type="pathway name" value="Activation of G protein gated Potassium channels"/>
</dbReference>
<dbReference type="Reactome" id="R-RNO-418594">
    <property type="pathway name" value="G alpha (i) signalling events"/>
</dbReference>
<dbReference type="Reactome" id="R-RNO-420499">
    <property type="pathway name" value="Class C/3 (Metabotropic glutamate/pheromone receptors)"/>
</dbReference>
<dbReference type="Reactome" id="R-RNO-977444">
    <property type="pathway name" value="GABA B receptor activation"/>
</dbReference>
<dbReference type="Reactome" id="R-RNO-997272">
    <property type="pathway name" value="Inhibition of voltage gated Ca2+ channels via Gbeta/gamma subunits"/>
</dbReference>
<dbReference type="EvolutionaryTrace" id="Q9Z0U4"/>
<dbReference type="PRO" id="PR:Q9Z0U4"/>
<dbReference type="Proteomes" id="UP000002494">
    <property type="component" value="Chromosome 20"/>
</dbReference>
<dbReference type="Bgee" id="ENSRNOG00000000774">
    <property type="expression patterns" value="Expressed in frontal cortex and 20 other cell types or tissues"/>
</dbReference>
<dbReference type="ExpressionAtlas" id="Q9Z0U4">
    <property type="expression patterns" value="baseline and differential"/>
</dbReference>
<dbReference type="GO" id="GO:0030673">
    <property type="term" value="C:axolemma"/>
    <property type="evidence" value="ECO:0000314"/>
    <property type="project" value="RGD"/>
</dbReference>
<dbReference type="GO" id="GO:0005737">
    <property type="term" value="C:cytoplasm"/>
    <property type="evidence" value="ECO:0000266"/>
    <property type="project" value="RGD"/>
</dbReference>
<dbReference type="GO" id="GO:0043198">
    <property type="term" value="C:dendritic shaft"/>
    <property type="evidence" value="ECO:0000314"/>
    <property type="project" value="RGD"/>
</dbReference>
<dbReference type="GO" id="GO:0043197">
    <property type="term" value="C:dendritic spine"/>
    <property type="evidence" value="ECO:0000314"/>
    <property type="project" value="RGD"/>
</dbReference>
<dbReference type="GO" id="GO:0005789">
    <property type="term" value="C:endoplasmic reticulum membrane"/>
    <property type="evidence" value="ECO:0000314"/>
    <property type="project" value="RGD"/>
</dbReference>
<dbReference type="GO" id="GO:0005615">
    <property type="term" value="C:extracellular space"/>
    <property type="evidence" value="ECO:0000314"/>
    <property type="project" value="RGD"/>
</dbReference>
<dbReference type="GO" id="GO:1902712">
    <property type="term" value="C:G protein-coupled GABA receptor complex"/>
    <property type="evidence" value="ECO:0000353"/>
    <property type="project" value="ComplexPortal"/>
</dbReference>
<dbReference type="GO" id="GO:0038037">
    <property type="term" value="C:G protein-coupled receptor dimeric complex"/>
    <property type="evidence" value="ECO:0000266"/>
    <property type="project" value="RGD"/>
</dbReference>
<dbReference type="GO" id="GO:0038039">
    <property type="term" value="C:G protein-coupled receptor heterodimeric complex"/>
    <property type="evidence" value="ECO:0000250"/>
    <property type="project" value="UniProtKB"/>
</dbReference>
<dbReference type="GO" id="GO:1902710">
    <property type="term" value="C:GABA receptor complex"/>
    <property type="evidence" value="ECO:0000314"/>
    <property type="project" value="CAFA"/>
</dbReference>
<dbReference type="GO" id="GO:0098982">
    <property type="term" value="C:GABA-ergic synapse"/>
    <property type="evidence" value="ECO:0000314"/>
    <property type="project" value="SynGO"/>
</dbReference>
<dbReference type="GO" id="GO:0098978">
    <property type="term" value="C:glutamatergic synapse"/>
    <property type="evidence" value="ECO:0000314"/>
    <property type="project" value="SynGO"/>
</dbReference>
<dbReference type="GO" id="GO:0016020">
    <property type="term" value="C:membrane"/>
    <property type="evidence" value="ECO:0000266"/>
    <property type="project" value="RGD"/>
</dbReference>
<dbReference type="GO" id="GO:0031966">
    <property type="term" value="C:mitochondrial membrane"/>
    <property type="evidence" value="ECO:0000314"/>
    <property type="project" value="RGD"/>
</dbReference>
<dbReference type="GO" id="GO:0043025">
    <property type="term" value="C:neuronal cell body"/>
    <property type="evidence" value="ECO:0000314"/>
    <property type="project" value="RGD"/>
</dbReference>
<dbReference type="GO" id="GO:0043204">
    <property type="term" value="C:perikaryon"/>
    <property type="evidence" value="ECO:0007669"/>
    <property type="project" value="UniProtKB-SubCell"/>
</dbReference>
<dbReference type="GO" id="GO:0005886">
    <property type="term" value="C:plasma membrane"/>
    <property type="evidence" value="ECO:0000314"/>
    <property type="project" value="CAFA"/>
</dbReference>
<dbReference type="GO" id="GO:0045211">
    <property type="term" value="C:postsynaptic membrane"/>
    <property type="evidence" value="ECO:0000314"/>
    <property type="project" value="SynGO"/>
</dbReference>
<dbReference type="GO" id="GO:0098793">
    <property type="term" value="C:presynapse"/>
    <property type="evidence" value="ECO:0000266"/>
    <property type="project" value="RGD"/>
</dbReference>
<dbReference type="GO" id="GO:0042734">
    <property type="term" value="C:presynaptic membrane"/>
    <property type="evidence" value="ECO:0000314"/>
    <property type="project" value="SynGO"/>
</dbReference>
<dbReference type="GO" id="GO:0098685">
    <property type="term" value="C:Schaffer collateral - CA1 synapse"/>
    <property type="evidence" value="ECO:0000266"/>
    <property type="project" value="RGD"/>
</dbReference>
<dbReference type="GO" id="GO:0097060">
    <property type="term" value="C:synaptic membrane"/>
    <property type="evidence" value="ECO:0000314"/>
    <property type="project" value="CAFA"/>
</dbReference>
<dbReference type="GO" id="GO:0008021">
    <property type="term" value="C:synaptic vesicle"/>
    <property type="evidence" value="ECO:0000314"/>
    <property type="project" value="RGD"/>
</dbReference>
<dbReference type="GO" id="GO:1990430">
    <property type="term" value="F:extracellular matrix protein binding"/>
    <property type="evidence" value="ECO:0000315"/>
    <property type="project" value="CAFA"/>
</dbReference>
<dbReference type="GO" id="GO:0004965">
    <property type="term" value="F:G protein-coupled GABA receptor activity"/>
    <property type="evidence" value="ECO:0000314"/>
    <property type="project" value="RGD"/>
</dbReference>
<dbReference type="GO" id="GO:0099579">
    <property type="term" value="F:G protein-coupled neurotransmitter receptor activity involved in regulation of postsynaptic membrane potential"/>
    <property type="evidence" value="ECO:0000266"/>
    <property type="project" value="RGD"/>
</dbReference>
<dbReference type="GO" id="GO:0150047">
    <property type="term" value="F:G protein-coupled neurotransmitter receptor activity involved in regulation of presynaptic membrane potential"/>
    <property type="evidence" value="ECO:0000266"/>
    <property type="project" value="RGD"/>
</dbReference>
<dbReference type="GO" id="GO:0046982">
    <property type="term" value="F:protein heterodimerization activity"/>
    <property type="evidence" value="ECO:0000353"/>
    <property type="project" value="CAFA"/>
</dbReference>
<dbReference type="GO" id="GO:0007193">
    <property type="term" value="P:adenylate cyclase-inhibiting G protein-coupled receptor signaling pathway"/>
    <property type="evidence" value="ECO:0000314"/>
    <property type="project" value="MGI"/>
</dbReference>
<dbReference type="GO" id="GO:0007214">
    <property type="term" value="P:gamma-aminobutyric acid signaling pathway"/>
    <property type="evidence" value="ECO:0000314"/>
    <property type="project" value="ComplexPortal"/>
</dbReference>
<dbReference type="GO" id="GO:0008285">
    <property type="term" value="P:negative regulation of cell population proliferation"/>
    <property type="evidence" value="ECO:0000315"/>
    <property type="project" value="RGD"/>
</dbReference>
<dbReference type="GO" id="GO:0033602">
    <property type="term" value="P:negative regulation of dopamine secretion"/>
    <property type="evidence" value="ECO:0000314"/>
    <property type="project" value="RGD"/>
</dbReference>
<dbReference type="GO" id="GO:0032811">
    <property type="term" value="P:negative regulation of epinephrine secretion"/>
    <property type="evidence" value="ECO:0000315"/>
    <property type="project" value="RGD"/>
</dbReference>
<dbReference type="GO" id="GO:0014053">
    <property type="term" value="P:negative regulation of gamma-aminobutyric acid secretion"/>
    <property type="evidence" value="ECO:0000315"/>
    <property type="project" value="RGD"/>
</dbReference>
<dbReference type="GO" id="GO:0050805">
    <property type="term" value="P:negative regulation of synaptic transmission"/>
    <property type="evidence" value="ECO:0000314"/>
    <property type="project" value="RGD"/>
</dbReference>
<dbReference type="GO" id="GO:0150099">
    <property type="term" value="P:neuron-glial cell signaling"/>
    <property type="evidence" value="ECO:0000316"/>
    <property type="project" value="ARUK-UCL"/>
</dbReference>
<dbReference type="GO" id="GO:0001649">
    <property type="term" value="P:osteoblast differentiation"/>
    <property type="evidence" value="ECO:0000315"/>
    <property type="project" value="RGD"/>
</dbReference>
<dbReference type="GO" id="GO:0014049">
    <property type="term" value="P:positive regulation of glutamate secretion"/>
    <property type="evidence" value="ECO:0000315"/>
    <property type="project" value="RGD"/>
</dbReference>
<dbReference type="GO" id="GO:0060124">
    <property type="term" value="P:positive regulation of growth hormone secretion"/>
    <property type="evidence" value="ECO:0000315"/>
    <property type="project" value="RGD"/>
</dbReference>
<dbReference type="GO" id="GO:0014048">
    <property type="term" value="P:regulation of glutamate secretion"/>
    <property type="evidence" value="ECO:0000314"/>
    <property type="project" value="RGD"/>
</dbReference>
<dbReference type="GO" id="GO:0045471">
    <property type="term" value="P:response to ethanol"/>
    <property type="evidence" value="ECO:0000270"/>
    <property type="project" value="RGD"/>
</dbReference>
<dbReference type="GO" id="GO:0035094">
    <property type="term" value="P:response to nicotine"/>
    <property type="evidence" value="ECO:0000270"/>
    <property type="project" value="RGD"/>
</dbReference>
<dbReference type="GO" id="GO:0051932">
    <property type="term" value="P:synaptic transmission, GABAergic"/>
    <property type="evidence" value="ECO:0000303"/>
    <property type="project" value="ComplexPortal"/>
</dbReference>
<dbReference type="CDD" id="cd15291">
    <property type="entry name" value="7tmC_GABA-B-R1"/>
    <property type="match status" value="1"/>
</dbReference>
<dbReference type="CDD" id="cd00033">
    <property type="entry name" value="CCP"/>
    <property type="match status" value="1"/>
</dbReference>
<dbReference type="CDD" id="cd06366">
    <property type="entry name" value="PBP1_GABAb_receptor"/>
    <property type="match status" value="1"/>
</dbReference>
<dbReference type="FunFam" id="3.40.50.2300:FF:000055">
    <property type="entry name" value="Gamma-aminobutyric acid type B receptor subunit 1"/>
    <property type="match status" value="1"/>
</dbReference>
<dbReference type="FunFam" id="2.10.70.10:FF:000031">
    <property type="entry name" value="gamma-aminobutyric acid type B receptor subunit 1"/>
    <property type="match status" value="1"/>
</dbReference>
<dbReference type="FunFam" id="3.40.50.2300:FF:000072">
    <property type="entry name" value="Gamma-aminobutyric acid type B receptor subunit 2"/>
    <property type="match status" value="1"/>
</dbReference>
<dbReference type="Gene3D" id="3.40.50.2300">
    <property type="match status" value="2"/>
</dbReference>
<dbReference type="Gene3D" id="2.10.70.10">
    <property type="entry name" value="Complement Module, domain 1"/>
    <property type="match status" value="1"/>
</dbReference>
<dbReference type="InterPro" id="IPR001828">
    <property type="entry name" value="ANF_lig-bd_rcpt"/>
</dbReference>
<dbReference type="InterPro" id="IPR002455">
    <property type="entry name" value="GPCR3_GABA-B"/>
</dbReference>
<dbReference type="InterPro" id="IPR017978">
    <property type="entry name" value="GPCR_3_C"/>
</dbReference>
<dbReference type="InterPro" id="IPR002456">
    <property type="entry name" value="GPCR_3_GABA_rcpt_B1"/>
</dbReference>
<dbReference type="InterPro" id="IPR028082">
    <property type="entry name" value="Peripla_BP_I"/>
</dbReference>
<dbReference type="InterPro" id="IPR035976">
    <property type="entry name" value="Sushi/SCR/CCP_sf"/>
</dbReference>
<dbReference type="InterPro" id="IPR000436">
    <property type="entry name" value="Sushi_SCR_CCP_dom"/>
</dbReference>
<dbReference type="PANTHER" id="PTHR10519">
    <property type="entry name" value="GABA-B RECEPTOR"/>
    <property type="match status" value="1"/>
</dbReference>
<dbReference type="PANTHER" id="PTHR10519:SF77">
    <property type="entry name" value="GAMMA-AMINOBUTYRIC ACID TYPE B RECEPTOR SUBUNIT 1"/>
    <property type="match status" value="1"/>
</dbReference>
<dbReference type="Pfam" id="PF00003">
    <property type="entry name" value="7tm_3"/>
    <property type="match status" value="1"/>
</dbReference>
<dbReference type="Pfam" id="PF01094">
    <property type="entry name" value="ANF_receptor"/>
    <property type="match status" value="1"/>
</dbReference>
<dbReference type="Pfam" id="PF00084">
    <property type="entry name" value="Sushi"/>
    <property type="match status" value="1"/>
</dbReference>
<dbReference type="PRINTS" id="PR01177">
    <property type="entry name" value="GABAB1RECPTR"/>
</dbReference>
<dbReference type="PRINTS" id="PR01176">
    <property type="entry name" value="GABABRECEPTR"/>
</dbReference>
<dbReference type="SMART" id="SM00032">
    <property type="entry name" value="CCP"/>
    <property type="match status" value="2"/>
</dbReference>
<dbReference type="SUPFAM" id="SSF57535">
    <property type="entry name" value="Complement control module/SCR domain"/>
    <property type="match status" value="2"/>
</dbReference>
<dbReference type="SUPFAM" id="SSF53822">
    <property type="entry name" value="Periplasmic binding protein-like I"/>
    <property type="match status" value="1"/>
</dbReference>
<dbReference type="PROSITE" id="PS50259">
    <property type="entry name" value="G_PROTEIN_RECEP_F3_4"/>
    <property type="match status" value="1"/>
</dbReference>
<dbReference type="PROSITE" id="PS50923">
    <property type="entry name" value="SUSHI"/>
    <property type="match status" value="1"/>
</dbReference>
<keyword id="KW-0002">3D-structure</keyword>
<keyword id="KW-0025">Alternative splicing</keyword>
<keyword id="KW-1003">Cell membrane</keyword>
<keyword id="KW-0966">Cell projection</keyword>
<keyword id="KW-0175">Coiled coil</keyword>
<keyword id="KW-1015">Disulfide bond</keyword>
<keyword id="KW-0297">G-protein coupled receptor</keyword>
<keyword id="KW-0325">Glycoprotein</keyword>
<keyword id="KW-0472">Membrane</keyword>
<keyword id="KW-0597">Phosphoprotein</keyword>
<keyword id="KW-0628">Postsynaptic cell membrane</keyword>
<keyword id="KW-0675">Receptor</keyword>
<keyword id="KW-1185">Reference proteome</keyword>
<keyword id="KW-0677">Repeat</keyword>
<keyword id="KW-0732">Signal</keyword>
<keyword id="KW-0770">Synapse</keyword>
<keyword id="KW-0807">Transducer</keyword>
<keyword id="KW-0812">Transmembrane</keyword>
<keyword id="KW-1133">Transmembrane helix</keyword>
<feature type="signal peptide" evidence="3">
    <location>
        <begin position="1"/>
        <end position="19"/>
    </location>
</feature>
<feature type="chain" id="PRO_0000012951" description="Gamma-aminobutyric acid type B receptor subunit 1">
    <location>
        <begin position="20"/>
        <end position="960"/>
    </location>
</feature>
<feature type="topological domain" description="Extracellular" evidence="3">
    <location>
        <begin position="20"/>
        <end position="590"/>
    </location>
</feature>
<feature type="transmembrane region" description="Helical; Name=1" evidence="3">
    <location>
        <begin position="591"/>
        <end position="611"/>
    </location>
</feature>
<feature type="topological domain" description="Cytoplasmic" evidence="3">
    <location>
        <begin position="612"/>
        <end position="630"/>
    </location>
</feature>
<feature type="transmembrane region" description="Helical; Name=2" evidence="3">
    <location>
        <begin position="631"/>
        <end position="651"/>
    </location>
</feature>
<feature type="topological domain" description="Extracellular" evidence="3">
    <location>
        <begin position="652"/>
        <end position="666"/>
    </location>
</feature>
<feature type="transmembrane region" description="Helical; Name=3" evidence="3">
    <location>
        <begin position="667"/>
        <end position="687"/>
    </location>
</feature>
<feature type="topological domain" description="Cytoplasmic" evidence="3">
    <location>
        <begin position="688"/>
        <end position="709"/>
    </location>
</feature>
<feature type="transmembrane region" description="Helical; Name=4" evidence="3">
    <location>
        <begin position="710"/>
        <end position="730"/>
    </location>
</feature>
<feature type="topological domain" description="Extracellular" evidence="3">
    <location>
        <begin position="731"/>
        <end position="767"/>
    </location>
</feature>
<feature type="transmembrane region" description="Helical; Name=5" evidence="3">
    <location>
        <begin position="768"/>
        <end position="788"/>
    </location>
</feature>
<feature type="topological domain" description="Cytoplasmic" evidence="3">
    <location>
        <begin position="789"/>
        <end position="803"/>
    </location>
</feature>
<feature type="transmembrane region" description="Helical; Name=6" evidence="3">
    <location>
        <begin position="804"/>
        <end position="824"/>
    </location>
</feature>
<feature type="topological domain" description="Extracellular" evidence="3">
    <location>
        <begin position="825"/>
        <end position="832"/>
    </location>
</feature>
<feature type="transmembrane region" description="Helical; Name=7" evidence="3">
    <location>
        <begin position="833"/>
        <end position="853"/>
    </location>
</feature>
<feature type="topological domain" description="Cytoplasmic" evidence="3">
    <location>
        <begin position="854"/>
        <end position="960"/>
    </location>
</feature>
<feature type="domain" description="Sushi 1" evidence="3">
    <location>
        <begin position="29"/>
        <end position="95"/>
    </location>
</feature>
<feature type="domain" description="Sushi 2" evidence="4">
    <location>
        <begin position="97"/>
        <end position="158"/>
    </location>
</feature>
<feature type="region of interest" description="Disordered" evidence="5">
    <location>
        <begin position="866"/>
        <end position="891"/>
    </location>
</feature>
<feature type="region of interest" description="Interaction with ATF4" evidence="11">
    <location>
        <begin position="887"/>
        <end position="915"/>
    </location>
</feature>
<feature type="region of interest" description="Disordered" evidence="5">
    <location>
        <begin position="908"/>
        <end position="960"/>
    </location>
</feature>
<feature type="coiled-coil region" evidence="3">
    <location>
        <begin position="870"/>
        <end position="924"/>
    </location>
</feature>
<feature type="compositionally biased region" description="Polar residues" evidence="5">
    <location>
        <begin position="866"/>
        <end position="879"/>
    </location>
</feature>
<feature type="binding site" evidence="1">
    <location>
        <position position="246"/>
    </location>
    <ligand>
        <name>4-aminobutanoate</name>
        <dbReference type="ChEBI" id="CHEBI:59888"/>
        <note>agonist</note>
    </ligand>
</feature>
<feature type="binding site" evidence="1">
    <location>
        <position position="269"/>
    </location>
    <ligand>
        <name>4-aminobutanoate</name>
        <dbReference type="ChEBI" id="CHEBI:59888"/>
        <note>agonist</note>
    </ligand>
</feature>
<feature type="binding site" evidence="1">
    <location>
        <position position="286"/>
    </location>
    <ligand>
        <name>4-aminobutanoate</name>
        <dbReference type="ChEBI" id="CHEBI:59888"/>
        <note>agonist</note>
    </ligand>
</feature>
<feature type="binding site" evidence="1">
    <location>
        <position position="366"/>
    </location>
    <ligand>
        <name>4-aminobutanoate</name>
        <dbReference type="ChEBI" id="CHEBI:59888"/>
        <note>agonist</note>
    </ligand>
</feature>
<feature type="binding site" evidence="1">
    <location>
        <position position="465"/>
    </location>
    <ligand>
        <name>4-aminobutanoate</name>
        <dbReference type="ChEBI" id="CHEBI:59888"/>
        <note>agonist</note>
    </ligand>
</feature>
<feature type="modified residue" description="Phosphothreonine" evidence="2">
    <location>
        <position position="872"/>
    </location>
</feature>
<feature type="modified residue" description="Phosphothreonine" evidence="30">
    <location>
        <position position="929"/>
    </location>
</feature>
<feature type="glycosylation site" description="N-linked (GlcNAc...) asparagine" evidence="3">
    <location>
        <position position="23"/>
    </location>
</feature>
<feature type="glycosylation site" description="N-linked (GlcNAc...) asparagine" evidence="31">
    <location>
        <position position="83"/>
    </location>
</feature>
<feature type="glycosylation site" description="N-linked (GlcNAc...) asparagine" evidence="3">
    <location>
        <position position="408"/>
    </location>
</feature>
<feature type="glycosylation site" description="N-linked (GlcNAc...) asparagine" evidence="31">
    <location>
        <position position="439"/>
    </location>
</feature>
<feature type="glycosylation site" description="N-linked (GlcNAc...) asparagine" evidence="3">
    <location>
        <position position="481"/>
    </location>
</feature>
<feature type="glycosylation site" description="N-linked (GlcNAc...) asparagine" evidence="3">
    <location>
        <position position="501"/>
    </location>
</feature>
<feature type="glycosylation site" description="N-linked (GlcNAc...) asparagine" evidence="3">
    <location>
        <position position="513"/>
    </location>
</feature>
<feature type="disulfide bond" evidence="4 13 28 29">
    <location>
        <begin position="99"/>
        <end position="144"/>
    </location>
</feature>
<feature type="disulfide bond" evidence="4 13 28 29">
    <location>
        <begin position="130"/>
        <end position="156"/>
    </location>
</feature>
<feature type="disulfide bond" evidence="1">
    <location>
        <begin position="219"/>
        <end position="245"/>
    </location>
</feature>
<feature type="disulfide bond" evidence="1">
    <location>
        <begin position="375"/>
        <end position="409"/>
    </location>
</feature>
<feature type="splice variant" id="VSP_062372" description="In isoform 1B, isoform 1C and isoform 1D." evidence="14 18">
    <original>MLLLLLVPLFLRPLGAGGAQTPNATSEGCQIIHPPWEGGIRYRGLTRDQVKAINFLPVDYEIEYVCRGEREVVGPKVRKCLANGSWTDMDTPSRCVRICSKSYLTLENGKVFLTGGDLPALDGARVEFRCDPDFHLVGSSRSVCSQGQWSTPKPHCQVNRTPH</original>
    <variation>MGPGGPCTPVGWPLPLLLVMAAGVAPVWASHSPHLPRPHPRVPPHPS</variation>
    <location>
        <begin position="1"/>
        <end position="163"/>
    </location>
</feature>
<feature type="splice variant" id="VSP_062373" description="In isoform 1C and isoform 1E." evidence="7">
    <original>G</original>
    <variation>GELWSFAVSSDVQRRATVGGDSPICVWPAPES</variation>
    <location>
        <position position="770"/>
    </location>
</feature>
<feature type="splice variant" id="VSP_062374" description="In isoform 1D." evidence="18">
    <original>KEERVSELRHQLQSRQQLRSRRHPP</original>
    <variation>VCGDKQPGPPVSEGGLPVVGPSIEV</variation>
    <location>
        <begin position="904"/>
        <end position="928"/>
    </location>
</feature>
<feature type="splice variant" id="VSP_062375" description="In isoform 1D." evidence="18">
    <location>
        <begin position="929"/>
        <end position="960"/>
    </location>
</feature>
<feature type="mutagenesis site" description="No change in the affinity for GABA." evidence="9">
    <original>S</original>
    <variation>A</variation>
    <location>
        <position position="247"/>
    </location>
</feature>
<feature type="mutagenesis site" description="No change in the affinity for GABA." evidence="9">
    <original>S</original>
    <variation>A</variation>
    <location>
        <position position="268"/>
    </location>
</feature>
<feature type="mutagenesis site" description="Decrease in the affinity for GABA." evidence="9">
    <original>S</original>
    <variation>A</variation>
    <location>
        <position position="269"/>
    </location>
</feature>
<feature type="strand" evidence="32">
    <location>
        <begin position="96"/>
        <end position="98"/>
    </location>
</feature>
<feature type="helix" evidence="32">
    <location>
        <begin position="101"/>
        <end position="104"/>
    </location>
</feature>
<feature type="strand" evidence="32">
    <location>
        <begin position="109"/>
        <end position="112"/>
    </location>
</feature>
<feature type="turn" evidence="32">
    <location>
        <begin position="120"/>
        <end position="123"/>
    </location>
</feature>
<feature type="strand" evidence="32">
    <location>
        <begin position="125"/>
        <end position="130"/>
    </location>
</feature>
<feature type="strand" evidence="32">
    <location>
        <begin position="134"/>
        <end position="136"/>
    </location>
</feature>
<feature type="strand" evidence="32">
    <location>
        <begin position="141"/>
        <end position="145"/>
    </location>
</feature>
<feature type="strand" evidence="32">
    <location>
        <begin position="148"/>
        <end position="151"/>
    </location>
</feature>
<feature type="strand" evidence="32">
    <location>
        <begin position="156"/>
        <end position="158"/>
    </location>
</feature>
<organism>
    <name type="scientific">Rattus norvegicus</name>
    <name type="common">Rat</name>
    <dbReference type="NCBI Taxonomy" id="10116"/>
    <lineage>
        <taxon>Eukaryota</taxon>
        <taxon>Metazoa</taxon>
        <taxon>Chordata</taxon>
        <taxon>Craniata</taxon>
        <taxon>Vertebrata</taxon>
        <taxon>Euteleostomi</taxon>
        <taxon>Mammalia</taxon>
        <taxon>Eutheria</taxon>
        <taxon>Euarchontoglires</taxon>
        <taxon>Glires</taxon>
        <taxon>Rodentia</taxon>
        <taxon>Myomorpha</taxon>
        <taxon>Muroidea</taxon>
        <taxon>Muridae</taxon>
        <taxon>Murinae</taxon>
        <taxon>Rattus</taxon>
    </lineage>
</organism>
<evidence type="ECO:0000250" key="1">
    <source>
        <dbReference type="UniProtKB" id="Q9UBS5"/>
    </source>
</evidence>
<evidence type="ECO:0000250" key="2">
    <source>
        <dbReference type="UniProtKB" id="Q9WV18"/>
    </source>
</evidence>
<evidence type="ECO:0000255" key="3"/>
<evidence type="ECO:0000255" key="4">
    <source>
        <dbReference type="PROSITE-ProRule" id="PRU00302"/>
    </source>
</evidence>
<evidence type="ECO:0000256" key="5">
    <source>
        <dbReference type="SAM" id="MobiDB-lite"/>
    </source>
</evidence>
<evidence type="ECO:0000269" key="6">
    <source>
    </source>
</evidence>
<evidence type="ECO:0000269" key="7">
    <source>
    </source>
</evidence>
<evidence type="ECO:0000269" key="8">
    <source>
    </source>
</evidence>
<evidence type="ECO:0000269" key="9">
    <source>
    </source>
</evidence>
<evidence type="ECO:0000269" key="10">
    <source>
    </source>
</evidence>
<evidence type="ECO:0000269" key="11">
    <source>
    </source>
</evidence>
<evidence type="ECO:0000269" key="12">
    <source>
    </source>
</evidence>
<evidence type="ECO:0000269" key="13">
    <source>
    </source>
</evidence>
<evidence type="ECO:0000269" key="14">
    <source>
    </source>
</evidence>
<evidence type="ECO:0000269" key="15">
    <source>
    </source>
</evidence>
<evidence type="ECO:0000269" key="16">
    <source>
    </source>
</evidence>
<evidence type="ECO:0000269" key="17">
    <source>
    </source>
</evidence>
<evidence type="ECO:0000269" key="18">
    <source>
    </source>
</evidence>
<evidence type="ECO:0000303" key="19">
    <source>
    </source>
</evidence>
<evidence type="ECO:0000303" key="20">
    <source>
    </source>
</evidence>
<evidence type="ECO:0000303" key="21">
    <source>
    </source>
</evidence>
<evidence type="ECO:0000303" key="22">
    <source>
    </source>
</evidence>
<evidence type="ECO:0000303" key="23">
    <source>
    </source>
</evidence>
<evidence type="ECO:0000303" key="24">
    <source>
    </source>
</evidence>
<evidence type="ECO:0000303" key="25">
    <source>
    </source>
</evidence>
<evidence type="ECO:0000305" key="26"/>
<evidence type="ECO:0000305" key="27">
    <source>
    </source>
</evidence>
<evidence type="ECO:0007744" key="28">
    <source>
        <dbReference type="PDB" id="1SRZ"/>
    </source>
</evidence>
<evidence type="ECO:0007744" key="29">
    <source>
        <dbReference type="PDB" id="1SS2"/>
    </source>
</evidence>
<evidence type="ECO:0007744" key="30">
    <source>
    </source>
</evidence>
<evidence type="ECO:0007744" key="31">
    <source>
    </source>
</evidence>
<evidence type="ECO:0007829" key="32">
    <source>
        <dbReference type="PDB" id="1SRZ"/>
    </source>
</evidence>
<gene>
    <name type="primary">Gabbr1</name>
</gene>
<reference key="1">
    <citation type="journal article" date="1997" name="Nature">
        <title>Expression cloning of GABA(B) receptors uncovers similarity to metabotropic glutamate receptors.</title>
        <authorList>
            <person name="Kaupmann K."/>
            <person name="Huggel K."/>
            <person name="Heid J."/>
            <person name="Flor P.J."/>
            <person name="Bischoff S."/>
            <person name="Mickel S.J."/>
            <person name="McMaster G."/>
            <person name="Angst C."/>
            <person name="Bittiger H."/>
            <person name="Froestl W."/>
            <person name="Bettler B."/>
        </authorList>
    </citation>
    <scope>NUCLEOTIDE SEQUENCE [MRNA] (ISOFORMS 1A AND 1B)</scope>
    <scope>FUNCTION</scope>
    <scope>SUBCELLULAR LOCATION</scope>
    <scope>TISSUE SPECIFICITY</scope>
    <source>
        <strain>RICO</strain>
        <tissue>Brain cortex</tissue>
        <tissue evidence="22">Cerebellum</tissue>
    </source>
</reference>
<reference key="2">
    <citation type="journal article" date="1998" name="Biochem. Biophys. Res. Commun.">
        <title>Cloning and tissue distribution of novel splice variants of the rat GABAB receptor.</title>
        <authorList>
            <person name="Isomoto S."/>
            <person name="Kaibara M."/>
            <person name="Sakurai-Yamashita Y."/>
            <person name="Nagayama Y."/>
            <person name="Uezono Y."/>
            <person name="Yano K."/>
            <person name="Taniyama K."/>
        </authorList>
    </citation>
    <scope>NUCLEOTIDE SEQUENCE [MRNA] (ISOFORMS 1C AND 1D)</scope>
    <scope>TISSUE SPECIFICITY</scope>
    <source>
        <tissue evidence="25">Cerebellum</tissue>
    </source>
</reference>
<reference key="3">
    <citation type="journal article" date="1999" name="Eur. J. Neurosci.">
        <title>Alternative splicing generates a novel isoform of the rat metabotropic GABA(B)R1 receptor.</title>
        <authorList>
            <person name="Pfaff T."/>
            <person name="Malitschek B."/>
            <person name="Kaupmann K."/>
            <person name="Prezeau L."/>
            <person name="Pin J.-P."/>
            <person name="Bettler B."/>
            <person name="Karschin A."/>
        </authorList>
    </citation>
    <scope>NUCLEOTIDE SEQUENCE [GENOMIC DNA] (ISOFORMS 1A; 1B; 1C AND 1E)</scope>
    <scope>ALTERNATIVE SPLICING</scope>
    <scope>FUNCTION</scope>
    <scope>SUBCELLULAR LOCATION</scope>
    <scope>TISSUE SPECIFICITY</scope>
    <source>
        <strain>Wistar</strain>
        <tissue evidence="20">Hippocampus</tissue>
    </source>
</reference>
<reference key="4">
    <citation type="journal article" date="1999" name="J. Biol. Chem.">
        <title>Identification of a GABAB receptor subunit, gb2, required for functional GABAB receptor activity.</title>
        <authorList>
            <person name="Ng G.Y.K."/>
            <person name="Clark J."/>
            <person name="Coulombe N."/>
            <person name="Ethier N."/>
            <person name="Hebert T.E."/>
            <person name="Sullivan R."/>
            <person name="Kargman S."/>
            <person name="Chateauneuf A."/>
            <person name="Tsukamoto N."/>
            <person name="McDonald T."/>
            <person name="Whiting P."/>
            <person name="Mezey E."/>
            <person name="Johnson M.P."/>
            <person name="Liu Q."/>
            <person name="Kolakowski L.F. Jr."/>
            <person name="Evans J.F."/>
            <person name="Bonner T.I."/>
            <person name="O'Neill G.P."/>
        </authorList>
    </citation>
    <scope>NUCLEOTIDE SEQUENCE [MRNA] (ISOFORM 1A)</scope>
    <scope>FUNCTION</scope>
    <source>
        <tissue evidence="19">Brain</tissue>
    </source>
</reference>
<reference key="5">
    <citation type="journal article" date="1998" name="Nature">
        <title>GABA(B) receptors function as a heteromeric assembly of the subunits GABA(B)R1 and GABA(B)R2.</title>
        <authorList>
            <person name="Jones K.A."/>
            <person name="Borowsky B."/>
            <person name="Tamm J.A."/>
            <person name="Craig D.A."/>
            <person name="Durkin M.M."/>
            <person name="Dai M."/>
            <person name="Yao W.-J."/>
            <person name="Johnson M."/>
            <person name="Gunwaldsen C.A."/>
            <person name="Huang L.-Y."/>
            <person name="Tang C."/>
            <person name="Shen Q."/>
            <person name="Salon J.A."/>
            <person name="Morse K."/>
            <person name="Laz T."/>
            <person name="Smith K.E."/>
            <person name="Nagarathnam D."/>
            <person name="Noble S.A."/>
            <person name="Branchek T.A."/>
            <person name="Gerald C."/>
        </authorList>
    </citation>
    <scope>FUNCTION</scope>
    <scope>INTERACTION WITH GABBR2</scope>
    <scope>SUBCELLULAR LOCATION</scope>
    <scope>TISSUE SPECIFICITY</scope>
    <source>
        <tissue evidence="23">Hypothalamus</tissue>
    </source>
</reference>
<reference key="6">
    <citation type="journal article" date="1998" name="Nature">
        <title>GABA-B receptor subtypes assemble into functional heteromeric complexes.</title>
        <authorList>
            <person name="Kaupmann K."/>
            <person name="Malitschek B."/>
            <person name="Schuler V."/>
            <person name="Heid J."/>
            <person name="Froestl W."/>
            <person name="Beck P."/>
            <person name="Mosbacher J."/>
            <person name="Bischoff S."/>
            <person name="Kulik A."/>
            <person name="Shigemoto R."/>
            <person name="Karschin A."/>
            <person name="Bettler B."/>
        </authorList>
    </citation>
    <scope>FUNCTION</scope>
    <scope>INTERACTION WITH GABBR2</scope>
    <scope>SUBCELLULAR LOCATION</scope>
    <scope>TISSUE SPECIFICITY</scope>
    <source>
        <tissue>Brain cortex</tissue>
        <tissue evidence="24">Cerebellum</tissue>
    </source>
</reference>
<reference key="7">
    <citation type="journal article" date="1999" name="Bioorg. Med. Chem.">
        <title>Synthesis of the nanomolar photoaffinity GABA(B) receptor ligand CGP 71872 reveals diversity in the tissue distribution of GABA(B) receptor forms.</title>
        <authorList>
            <person name="Belley M."/>
            <person name="Sullivan R."/>
            <person name="Reeves A."/>
            <person name="Evans J.F."/>
            <person name="O'Neill G.P."/>
            <person name="Ng G.Y.K."/>
        </authorList>
    </citation>
    <scope>TISSUE SPECIFICITY</scope>
</reference>
<reference key="8">
    <citation type="journal article" date="1999" name="Science">
        <title>Role of heteromer formation in GABAB receptor function.</title>
        <authorList>
            <person name="Kuner R."/>
            <person name="Koehr G."/>
            <person name="Gruenewald S."/>
            <person name="Eisenhardt G."/>
            <person name="Bach A."/>
            <person name="Kornau H.-C."/>
        </authorList>
    </citation>
    <scope>FUNCTION</scope>
    <scope>INTERACTION WITH GABBR2</scope>
    <scope>TISSUE SPECIFICITY</scope>
    <scope>DEVELOPMENTAL STAGE</scope>
</reference>
<reference key="9">
    <citation type="journal article" date="2000" name="Brain Res.">
        <title>Distribution of the GABA(B) receptor subunit gb2 in rat CNS.</title>
        <authorList>
            <person name="Clark J.A."/>
            <person name="Mezey E."/>
            <person name="Lam A.S."/>
            <person name="Bonner T.I."/>
        </authorList>
    </citation>
    <scope>TISSUE SPECIFICITY</scope>
    <source>
        <tissue evidence="21">Brain cortex</tissue>
    </source>
</reference>
<reference key="10">
    <citation type="journal article" date="2000" name="J. Biol. Chem.">
        <title>The metabotropic GABAB receptor directly interacts with the activating transcription factor 4.</title>
        <authorList>
            <person name="Nehring R.B."/>
            <person name="Horikawa H.P.M."/>
            <person name="El Far O."/>
            <person name="Kneussel M."/>
            <person name="Brandstatter J.H."/>
            <person name="Stamm S."/>
            <person name="Wischmeyer E."/>
            <person name="Betz H."/>
            <person name="Karschin A."/>
        </authorList>
    </citation>
    <scope>FUNCTION</scope>
    <scope>INTERACTION WITH ATF4</scope>
    <scope>SUBCELLULAR LOCATION</scope>
    <scope>TISSUE SPECIFICITY</scope>
</reference>
<reference key="11">
    <citation type="journal article" date="2000" name="Mol. Pharmacol.">
        <title>Ca(2+) requirement for high-affinity gamma-aminobutyric acid (GABA) binding at GABA(B) receptors: involvement of serine 269 of the GABA(B)R1 subunit.</title>
        <authorList>
            <person name="Galvez T."/>
            <person name="Urwyler S."/>
            <person name="Prezeau L."/>
            <person name="Mosbacher J."/>
            <person name="Joly C."/>
            <person name="Malitschek B."/>
            <person name="Heid J."/>
            <person name="Brabet I."/>
            <person name="Froestl W."/>
            <person name="Bettler B."/>
            <person name="Kaupmann K."/>
            <person name="Pin J.-P."/>
        </authorList>
    </citation>
    <scope>FUNCTION</scope>
    <scope>MUTAGENESIS OF SER-247; SER-268 AND SER-269</scope>
</reference>
<reference key="12">
    <citation type="journal article" date="2004" name="J. Biol. Chem.">
        <title>Marlin-1, a novel RNA-binding protein associates with GABA receptors.</title>
        <authorList>
            <person name="Couve A."/>
            <person name="Restituito S."/>
            <person name="Brandon J.M."/>
            <person name="Charles K.J."/>
            <person name="Bawagan H."/>
            <person name="Freeman K.B."/>
            <person name="Pangalos M.N."/>
            <person name="Calver A.R."/>
            <person name="Moss S.J."/>
        </authorList>
    </citation>
    <scope>INTERACTION WITH JAKMIP1</scope>
    <scope>SUBCELLULAR LOCATION</scope>
</reference>
<reference key="13">
    <citation type="journal article" date="2012" name="Nat. Commun.">
        <title>Quantitative maps of protein phosphorylation sites across 14 different rat organs and tissues.</title>
        <authorList>
            <person name="Lundby A."/>
            <person name="Secher A."/>
            <person name="Lage K."/>
            <person name="Nordsborg N.B."/>
            <person name="Dmytriyev A."/>
            <person name="Lundby C."/>
            <person name="Olsen J.V."/>
        </authorList>
    </citation>
    <scope>PHOSPHORYLATION [LARGE SCALE ANALYSIS] AT THR-929</scope>
    <scope>IDENTIFICATION BY MASS SPECTROMETRY [LARGE SCALE ANALYSIS]</scope>
</reference>
<reference key="14">
    <citation type="journal article" date="2013" name="J. Proteome Res.">
        <title>Site-specific glycan-peptide analysis for determination of N-glycoproteome heterogeneity.</title>
        <authorList>
            <person name="Parker B.L."/>
            <person name="Thaysen-Andersen M."/>
            <person name="Solis N."/>
            <person name="Scott N.E."/>
            <person name="Larsen M.R."/>
            <person name="Graham M.E."/>
            <person name="Packer N.H."/>
            <person name="Cordwell S.J."/>
        </authorList>
    </citation>
    <scope>GLYCOSYLATION [LARGE SCALE ANALYSIS] AT ASN-83 AND ASN-439</scope>
    <scope>IDENTIFICATION BY MASS SPECTROMETRY [LARGE SCALE ANALYSIS]</scope>
    <source>
        <tissue>Brain</tissue>
    </source>
</reference>
<reference evidence="28 29" key="15">
    <citation type="journal article" date="2004" name="J. Biol. Chem.">
        <title>Structural analysis of the complement control protein (CCP) modules of GABA(B) receptor 1a: only one of the two CCP modules is compactly folded.</title>
        <authorList>
            <person name="Blein S."/>
            <person name="Ginham R."/>
            <person name="Uhrin D."/>
            <person name="Smith B.O."/>
            <person name="Soares D.C."/>
            <person name="Veltel S."/>
            <person name="McIlhinney R.A."/>
            <person name="White J.H."/>
            <person name="Barlow P.N."/>
        </authorList>
    </citation>
    <scope>STRUCTURE BY NMR OF 96-159</scope>
    <scope>DISULFIDE BONDS</scope>
</reference>
<protein>
    <recommendedName>
        <fullName>Gamma-aminobutyric acid type B receptor subunit 1</fullName>
        <shortName>GABA-B receptor 1</shortName>
        <shortName>GABA-B-R1</shortName>
        <shortName>GABA-BR1</shortName>
        <shortName>GABABR1</shortName>
        <shortName>Gb1</shortName>
    </recommendedName>
</protein>
<sequence length="960" mass="108204">MLLLLLVPLFLRPLGAGGAQTPNATSEGCQIIHPPWEGGIRYRGLTRDQVKAINFLPVDYEIEYVCRGEREVVGPKVRKCLANGSWTDMDTPSRCVRICSKSYLTLENGKVFLTGGDLPALDGARVEFRCDPDFHLVGSSRSVCSQGQWSTPKPHCQVNRTPHSERRAVYIGALFPMSGGWPGGQACQPAVEMALEDVNSRRDILPDYELKLIHHDSKCDPGQATKYLYELLYNDPIKIILMPGCSSVSTLVAEAARMWNLIVLSYGSSSPALSNRQRFPTFFRTHPSATLHNPTRVKLFEKWGWKKIATIQQTTEVFTSTLDDLEERVKEAGIEITFRQSFFSDPAVPVKNLKRQDARIIVGLFYETEARKVFCEVYKERLFGKKYVWFLIGWYADNWFKTYDPSINCTVEEMTEAVEGHITTEIVMLNPANTRSISNMTSQEFVEKLTKRLKRHPEETGGFQEAPLAYDAIWALALALNKTSGGGGRSGVRLEDFNYNNQTITDQIYRAMNSSSFEGVSGHVVFDASGSRMAWTLIEQLQGGSYKKIGYYDSTKDDLSWSKTDKWIGGSPPADQTLVIKTFRFLSQKLFISVSVLSSLGIVLAVVCLSFNIYNSHVRYIQNSQPNLNNLTAVGCSLALAAVFPLGLDGYHIGRSQFPFVCQARLWLLGLGFSLGYGSMFTKIWWVHTVFTKKEEKKEWRKTLEPWKLYATVGLLVGMDVLTLAIWQIVDPLHRTIETFAKEEPKEDIDVSILPQLEHCSSKKMNTWLGIFYGYKGLLLLLGIFLAYETKSVSTEKINDHRAVGMAIYNVAVLCLITAPVTMILSSQQDAAFAFASLAIVFSSYITLVVLFVPKMRRLITRGEWQSETQDTMKTGSSTNNNEEEKSRLLEKENRELEKIIAEKEERVSELRHQLQSRQQLRSRRHPPTPPDPSGGLPRGPSEPPDRLSCDGSRVHLLYK</sequence>
<name>GABR1_RAT</name>